<name>IF4A_TRYCC</name>
<organism>
    <name type="scientific">Trypanosoma cruzi (strain CL Brener)</name>
    <dbReference type="NCBI Taxonomy" id="353153"/>
    <lineage>
        <taxon>Eukaryota</taxon>
        <taxon>Discoba</taxon>
        <taxon>Euglenozoa</taxon>
        <taxon>Kinetoplastea</taxon>
        <taxon>Metakinetoplastina</taxon>
        <taxon>Trypanosomatida</taxon>
        <taxon>Trypanosomatidae</taxon>
        <taxon>Trypanosoma</taxon>
        <taxon>Schizotrypanum</taxon>
    </lineage>
</organism>
<keyword id="KW-0067">ATP-binding</keyword>
<keyword id="KW-0347">Helicase</keyword>
<keyword id="KW-0378">Hydrolase</keyword>
<keyword id="KW-0396">Initiation factor</keyword>
<keyword id="KW-0547">Nucleotide-binding</keyword>
<keyword id="KW-0648">Protein biosynthesis</keyword>
<keyword id="KW-1185">Reference proteome</keyword>
<keyword id="KW-0694">RNA-binding</keyword>
<proteinExistence type="inferred from homology"/>
<feature type="chain" id="PRO_0000291645" description="Probable eukaryotic initiation factor 4A">
    <location>
        <begin position="1"/>
        <end position="404"/>
    </location>
</feature>
<feature type="domain" description="Helicase ATP-binding" evidence="2">
    <location>
        <begin position="57"/>
        <end position="231"/>
    </location>
</feature>
<feature type="domain" description="Helicase C-terminal" evidence="3">
    <location>
        <begin position="242"/>
        <end position="402"/>
    </location>
</feature>
<feature type="region of interest" description="Disordered" evidence="4">
    <location>
        <begin position="1"/>
        <end position="28"/>
    </location>
</feature>
<feature type="short sequence motif" description="Q motif">
    <location>
        <begin position="26"/>
        <end position="54"/>
    </location>
</feature>
<feature type="short sequence motif" description="DEAD box">
    <location>
        <begin position="179"/>
        <end position="182"/>
    </location>
</feature>
<feature type="binding site" evidence="2">
    <location>
        <begin position="70"/>
        <end position="77"/>
    </location>
    <ligand>
        <name>ATP</name>
        <dbReference type="ChEBI" id="CHEBI:30616"/>
    </ligand>
</feature>
<comment type="function">
    <text evidence="1">ATP-dependent RNA helicase which is a subunit of the eIF4F complex involved in cap recognition and is required for mRNA binding to ribosome. In the current model of translation initiation, eIF4A unwinds RNA secondary structures in the 5'-UTR of mRNAs which is necessary to allow efficient binding of the small ribosomal subunit, and subsequent scanning for the initiator codon (By similarity).</text>
</comment>
<comment type="catalytic activity">
    <reaction>
        <text>ATP + H2O = ADP + phosphate + H(+)</text>
        <dbReference type="Rhea" id="RHEA:13065"/>
        <dbReference type="ChEBI" id="CHEBI:15377"/>
        <dbReference type="ChEBI" id="CHEBI:15378"/>
        <dbReference type="ChEBI" id="CHEBI:30616"/>
        <dbReference type="ChEBI" id="CHEBI:43474"/>
        <dbReference type="ChEBI" id="CHEBI:456216"/>
        <dbReference type="EC" id="3.6.4.13"/>
    </reaction>
</comment>
<comment type="subunit">
    <text evidence="1">eIF4F is a multi-subunit complex, the composition of which varies with external and internal environmental conditions. It is composed of at least EIF4A, EIF4E and EIF4G (By similarity).</text>
</comment>
<comment type="similarity">
    <text evidence="5">Belongs to the DEAD box helicase family. eIF4A subfamily.</text>
</comment>
<accession>Q4E162</accession>
<sequence>MAQQGKVEPQDQDSFLDDQPGIRPIPSFDDMPLHQNLLRGIYSHGFEKPSSIQQRAIVPFTRGGDIIAQAQSGTGKTGAFSIGLLQRLDFRHNVLQGLVLSPTRELALQTAEVITRIGEFLAEGNSSFCATFVGGTRVQDDYRKLQAGSIVAVGTPGRVVDVTKRGAMRTEHLRVLVLDEADEMLSQGFAEQIYEIFRYLPKEIQVALFSATMPDDVLELTKKFMRDPTRILVKRESLTLEGIKQYFIAVEEEHKLDTLMDLYETVSIAQSVIFANTRRKVDWLAQQLNQSNHTVSCMHSEMPKQDREKVMSTFRNGSSRVLVTTDLVARGIDVHHVNIVINFDLPTNKESYLHRIGRGGRYGRKGVAINFVTQKDVEVLREIESHYHTQIDELPVDFAAYLGE</sequence>
<protein>
    <recommendedName>
        <fullName>Probable eukaryotic initiation factor 4A</fullName>
        <shortName>eIF-4A</shortName>
        <ecNumber>3.6.4.13</ecNumber>
    </recommendedName>
    <alternativeName>
        <fullName>ATP-dependent RNA helicase eIF4A</fullName>
    </alternativeName>
</protein>
<gene>
    <name type="ORF">Tc00.1047053511585.190</name>
</gene>
<reference key="1">
    <citation type="journal article" date="2005" name="Science">
        <title>The genome sequence of Trypanosoma cruzi, etiologic agent of Chagas disease.</title>
        <authorList>
            <person name="El-Sayed N.M.A."/>
            <person name="Myler P.J."/>
            <person name="Bartholomeu D.C."/>
            <person name="Nilsson D."/>
            <person name="Aggarwal G."/>
            <person name="Tran A.-N."/>
            <person name="Ghedin E."/>
            <person name="Worthey E.A."/>
            <person name="Delcher A.L."/>
            <person name="Blandin G."/>
            <person name="Westenberger S.J."/>
            <person name="Caler E."/>
            <person name="Cerqueira G.C."/>
            <person name="Branche C."/>
            <person name="Haas B."/>
            <person name="Anupama A."/>
            <person name="Arner E."/>
            <person name="Aslund L."/>
            <person name="Attipoe P."/>
            <person name="Bontempi E."/>
            <person name="Bringaud F."/>
            <person name="Burton P."/>
            <person name="Cadag E."/>
            <person name="Campbell D.A."/>
            <person name="Carrington M."/>
            <person name="Crabtree J."/>
            <person name="Darban H."/>
            <person name="da Silveira J.F."/>
            <person name="de Jong P."/>
            <person name="Edwards K."/>
            <person name="Englund P.T."/>
            <person name="Fazelina G."/>
            <person name="Feldblyum T."/>
            <person name="Ferella M."/>
            <person name="Frasch A.C."/>
            <person name="Gull K."/>
            <person name="Horn D."/>
            <person name="Hou L."/>
            <person name="Huang Y."/>
            <person name="Kindlund E."/>
            <person name="Klingbeil M."/>
            <person name="Kluge S."/>
            <person name="Koo H."/>
            <person name="Lacerda D."/>
            <person name="Levin M.J."/>
            <person name="Lorenzi H."/>
            <person name="Louie T."/>
            <person name="Machado C.R."/>
            <person name="McCulloch R."/>
            <person name="McKenna A."/>
            <person name="Mizuno Y."/>
            <person name="Mottram J.C."/>
            <person name="Nelson S."/>
            <person name="Ochaya S."/>
            <person name="Osoegawa K."/>
            <person name="Pai G."/>
            <person name="Parsons M."/>
            <person name="Pentony M."/>
            <person name="Pettersson U."/>
            <person name="Pop M."/>
            <person name="Ramirez J.L."/>
            <person name="Rinta J."/>
            <person name="Robertson L."/>
            <person name="Salzberg S.L."/>
            <person name="Sanchez D.O."/>
            <person name="Seyler A."/>
            <person name="Sharma R."/>
            <person name="Shetty J."/>
            <person name="Simpson A.J."/>
            <person name="Sisk E."/>
            <person name="Tammi M.T."/>
            <person name="Tarleton R."/>
            <person name="Teixeira S."/>
            <person name="Van Aken S."/>
            <person name="Vogt C."/>
            <person name="Ward P.N."/>
            <person name="Wickstead B."/>
            <person name="Wortman J."/>
            <person name="White O."/>
            <person name="Fraser C.M."/>
            <person name="Stuart K.D."/>
            <person name="Andersson B."/>
        </authorList>
    </citation>
    <scope>NUCLEOTIDE SEQUENCE [LARGE SCALE GENOMIC DNA]</scope>
    <source>
        <strain>CL Brener</strain>
    </source>
</reference>
<evidence type="ECO:0000250" key="1"/>
<evidence type="ECO:0000255" key="2">
    <source>
        <dbReference type="PROSITE-ProRule" id="PRU00541"/>
    </source>
</evidence>
<evidence type="ECO:0000255" key="3">
    <source>
        <dbReference type="PROSITE-ProRule" id="PRU00542"/>
    </source>
</evidence>
<evidence type="ECO:0000256" key="4">
    <source>
        <dbReference type="SAM" id="MobiDB-lite"/>
    </source>
</evidence>
<evidence type="ECO:0000305" key="5"/>
<dbReference type="EC" id="3.6.4.13"/>
<dbReference type="EMBL" id="AAHK01000053">
    <property type="protein sequence ID" value="EAN98527.1"/>
    <property type="molecule type" value="Genomic_DNA"/>
</dbReference>
<dbReference type="RefSeq" id="XP_820378.1">
    <property type="nucleotide sequence ID" value="XM_815285.1"/>
</dbReference>
<dbReference type="SMR" id="Q4E162"/>
<dbReference type="FunCoup" id="Q4E162">
    <property type="interactions" value="593"/>
</dbReference>
<dbReference type="STRING" id="353153.Q4E162"/>
<dbReference type="PaxDb" id="353153-Q4E162"/>
<dbReference type="EnsemblProtists" id="EAN98527">
    <property type="protein sequence ID" value="EAN98527"/>
    <property type="gene ID" value="Tc00.1047053511585.190"/>
</dbReference>
<dbReference type="GeneID" id="3553014"/>
<dbReference type="KEGG" id="tcr:511585.190"/>
<dbReference type="eggNOG" id="KOG0328">
    <property type="taxonomic scope" value="Eukaryota"/>
</dbReference>
<dbReference type="InParanoid" id="Q4E162"/>
<dbReference type="OMA" id="DTIHGDK"/>
<dbReference type="Proteomes" id="UP000002296">
    <property type="component" value="Unassembled WGS sequence"/>
</dbReference>
<dbReference type="GO" id="GO:0005829">
    <property type="term" value="C:cytosol"/>
    <property type="evidence" value="ECO:0007669"/>
    <property type="project" value="TreeGrafter"/>
</dbReference>
<dbReference type="GO" id="GO:0005524">
    <property type="term" value="F:ATP binding"/>
    <property type="evidence" value="ECO:0007669"/>
    <property type="project" value="UniProtKB-KW"/>
</dbReference>
<dbReference type="GO" id="GO:0016887">
    <property type="term" value="F:ATP hydrolysis activity"/>
    <property type="evidence" value="ECO:0007669"/>
    <property type="project" value="RHEA"/>
</dbReference>
<dbReference type="GO" id="GO:0003723">
    <property type="term" value="F:RNA binding"/>
    <property type="evidence" value="ECO:0007669"/>
    <property type="project" value="UniProtKB-KW"/>
</dbReference>
<dbReference type="GO" id="GO:0003724">
    <property type="term" value="F:RNA helicase activity"/>
    <property type="evidence" value="ECO:0007669"/>
    <property type="project" value="UniProtKB-EC"/>
</dbReference>
<dbReference type="GO" id="GO:0003743">
    <property type="term" value="F:translation initiation factor activity"/>
    <property type="evidence" value="ECO:0007669"/>
    <property type="project" value="UniProtKB-KW"/>
</dbReference>
<dbReference type="CDD" id="cd17939">
    <property type="entry name" value="DEADc_EIF4A"/>
    <property type="match status" value="1"/>
</dbReference>
<dbReference type="CDD" id="cd18787">
    <property type="entry name" value="SF2_C_DEAD"/>
    <property type="match status" value="1"/>
</dbReference>
<dbReference type="FunFam" id="3.40.50.300:FF:000849">
    <property type="entry name" value="ATP-dependent RNA helicase DBP5"/>
    <property type="match status" value="1"/>
</dbReference>
<dbReference type="FunFam" id="3.40.50.300:FF:000031">
    <property type="entry name" value="Eukaryotic initiation factor 4A-III"/>
    <property type="match status" value="1"/>
</dbReference>
<dbReference type="Gene3D" id="3.40.50.300">
    <property type="entry name" value="P-loop containing nucleotide triphosphate hydrolases"/>
    <property type="match status" value="2"/>
</dbReference>
<dbReference type="InterPro" id="IPR011545">
    <property type="entry name" value="DEAD/DEAH_box_helicase_dom"/>
</dbReference>
<dbReference type="InterPro" id="IPR050079">
    <property type="entry name" value="DEAD_box_RNA_helicase"/>
</dbReference>
<dbReference type="InterPro" id="IPR014001">
    <property type="entry name" value="Helicase_ATP-bd"/>
</dbReference>
<dbReference type="InterPro" id="IPR001650">
    <property type="entry name" value="Helicase_C-like"/>
</dbReference>
<dbReference type="InterPro" id="IPR027417">
    <property type="entry name" value="P-loop_NTPase"/>
</dbReference>
<dbReference type="InterPro" id="IPR000629">
    <property type="entry name" value="RNA-helicase_DEAD-box_CS"/>
</dbReference>
<dbReference type="InterPro" id="IPR014014">
    <property type="entry name" value="RNA_helicase_DEAD_Q_motif"/>
</dbReference>
<dbReference type="PANTHER" id="PTHR47959:SF1">
    <property type="entry name" value="ATP-DEPENDENT RNA HELICASE DBPA"/>
    <property type="match status" value="1"/>
</dbReference>
<dbReference type="PANTHER" id="PTHR47959">
    <property type="entry name" value="ATP-DEPENDENT RNA HELICASE RHLE-RELATED"/>
    <property type="match status" value="1"/>
</dbReference>
<dbReference type="Pfam" id="PF00270">
    <property type="entry name" value="DEAD"/>
    <property type="match status" value="1"/>
</dbReference>
<dbReference type="Pfam" id="PF00271">
    <property type="entry name" value="Helicase_C"/>
    <property type="match status" value="1"/>
</dbReference>
<dbReference type="SMART" id="SM00487">
    <property type="entry name" value="DEXDc"/>
    <property type="match status" value="1"/>
</dbReference>
<dbReference type="SMART" id="SM00490">
    <property type="entry name" value="HELICc"/>
    <property type="match status" value="1"/>
</dbReference>
<dbReference type="SUPFAM" id="SSF52540">
    <property type="entry name" value="P-loop containing nucleoside triphosphate hydrolases"/>
    <property type="match status" value="1"/>
</dbReference>
<dbReference type="PROSITE" id="PS00039">
    <property type="entry name" value="DEAD_ATP_HELICASE"/>
    <property type="match status" value="1"/>
</dbReference>
<dbReference type="PROSITE" id="PS51192">
    <property type="entry name" value="HELICASE_ATP_BIND_1"/>
    <property type="match status" value="1"/>
</dbReference>
<dbReference type="PROSITE" id="PS51194">
    <property type="entry name" value="HELICASE_CTER"/>
    <property type="match status" value="1"/>
</dbReference>
<dbReference type="PROSITE" id="PS51195">
    <property type="entry name" value="Q_MOTIF"/>
    <property type="match status" value="1"/>
</dbReference>